<comment type="function">
    <text evidence="2">Cell wall formation.</text>
</comment>
<comment type="catalytic activity">
    <reaction evidence="2">
        <text>2 D-alanine + ATP = D-alanyl-D-alanine + ADP + phosphate + H(+)</text>
        <dbReference type="Rhea" id="RHEA:11224"/>
        <dbReference type="ChEBI" id="CHEBI:15378"/>
        <dbReference type="ChEBI" id="CHEBI:30616"/>
        <dbReference type="ChEBI" id="CHEBI:43474"/>
        <dbReference type="ChEBI" id="CHEBI:57416"/>
        <dbReference type="ChEBI" id="CHEBI:57822"/>
        <dbReference type="ChEBI" id="CHEBI:456216"/>
        <dbReference type="EC" id="6.3.2.4"/>
    </reaction>
</comment>
<comment type="cofactor">
    <cofactor evidence="1">
        <name>Mg(2+)</name>
        <dbReference type="ChEBI" id="CHEBI:18420"/>
    </cofactor>
    <cofactor evidence="1">
        <name>Mn(2+)</name>
        <dbReference type="ChEBI" id="CHEBI:29035"/>
    </cofactor>
    <text evidence="1">Binds 2 magnesium or manganese ions per subunit.</text>
</comment>
<comment type="pathway">
    <text evidence="2">Cell wall biogenesis; peptidoglycan biosynthesis.</text>
</comment>
<comment type="subcellular location">
    <subcellularLocation>
        <location evidence="2">Cytoplasm</location>
    </subcellularLocation>
</comment>
<comment type="similarity">
    <text evidence="2">Belongs to the D-alanine--D-alanine ligase family.</text>
</comment>
<keyword id="KW-0067">ATP-binding</keyword>
<keyword id="KW-0133">Cell shape</keyword>
<keyword id="KW-0961">Cell wall biogenesis/degradation</keyword>
<keyword id="KW-0963">Cytoplasm</keyword>
<keyword id="KW-0436">Ligase</keyword>
<keyword id="KW-0460">Magnesium</keyword>
<keyword id="KW-0464">Manganese</keyword>
<keyword id="KW-0479">Metal-binding</keyword>
<keyword id="KW-0547">Nucleotide-binding</keyword>
<keyword id="KW-0573">Peptidoglycan synthesis</keyword>
<keyword id="KW-1185">Reference proteome</keyword>
<reference key="1">
    <citation type="journal article" date="2007" name="Nat. Biotechnol.">
        <title>Complete genome sequence of the fish pathogen Flavobacterium psychrophilum.</title>
        <authorList>
            <person name="Duchaud E."/>
            <person name="Boussaha M."/>
            <person name="Loux V."/>
            <person name="Bernardet J.-F."/>
            <person name="Michel C."/>
            <person name="Kerouault B."/>
            <person name="Mondot S."/>
            <person name="Nicolas P."/>
            <person name="Bossy R."/>
            <person name="Caron C."/>
            <person name="Bessieres P."/>
            <person name="Gibrat J.-F."/>
            <person name="Claverol S."/>
            <person name="Dumetz F."/>
            <person name="Le Henaff M."/>
            <person name="Benmansour A."/>
        </authorList>
    </citation>
    <scope>NUCLEOTIDE SEQUENCE [LARGE SCALE GENOMIC DNA]</scope>
    <source>
        <strain>ATCC 49511 / DSM 21280 / CIP 103535 / JIP02/86</strain>
    </source>
</reference>
<name>DDL_FLAPJ</name>
<organism>
    <name type="scientific">Flavobacterium psychrophilum (strain ATCC 49511 / DSM 21280 / CIP 103535 / JIP02/86)</name>
    <dbReference type="NCBI Taxonomy" id="402612"/>
    <lineage>
        <taxon>Bacteria</taxon>
        <taxon>Pseudomonadati</taxon>
        <taxon>Bacteroidota</taxon>
        <taxon>Flavobacteriia</taxon>
        <taxon>Flavobacteriales</taxon>
        <taxon>Flavobacteriaceae</taxon>
        <taxon>Flavobacterium</taxon>
    </lineage>
</organism>
<dbReference type="EC" id="6.3.2.4" evidence="2"/>
<dbReference type="EMBL" id="AM398681">
    <property type="protein sequence ID" value="CAL42758.1"/>
    <property type="molecule type" value="Genomic_DNA"/>
</dbReference>
<dbReference type="RefSeq" id="WP_011962814.1">
    <property type="nucleotide sequence ID" value="NC_009613.3"/>
</dbReference>
<dbReference type="RefSeq" id="YP_001295574.1">
    <property type="nucleotide sequence ID" value="NC_009613.3"/>
</dbReference>
<dbReference type="SMR" id="A6GXD5"/>
<dbReference type="STRING" id="402612.FP0653"/>
<dbReference type="EnsemblBacteria" id="CAL42758">
    <property type="protein sequence ID" value="CAL42758"/>
    <property type="gene ID" value="FP0653"/>
</dbReference>
<dbReference type="KEGG" id="fps:FP0653"/>
<dbReference type="PATRIC" id="fig|402612.5.peg.671"/>
<dbReference type="eggNOG" id="COG1181">
    <property type="taxonomic scope" value="Bacteria"/>
</dbReference>
<dbReference type="HOGENOM" id="CLU_039268_1_1_10"/>
<dbReference type="OrthoDB" id="9813261at2"/>
<dbReference type="UniPathway" id="UPA00219"/>
<dbReference type="Proteomes" id="UP000006394">
    <property type="component" value="Chromosome"/>
</dbReference>
<dbReference type="GO" id="GO:0005737">
    <property type="term" value="C:cytoplasm"/>
    <property type="evidence" value="ECO:0007669"/>
    <property type="project" value="UniProtKB-SubCell"/>
</dbReference>
<dbReference type="GO" id="GO:0005524">
    <property type="term" value="F:ATP binding"/>
    <property type="evidence" value="ECO:0007669"/>
    <property type="project" value="UniProtKB-KW"/>
</dbReference>
<dbReference type="GO" id="GO:0008716">
    <property type="term" value="F:D-alanine-D-alanine ligase activity"/>
    <property type="evidence" value="ECO:0007669"/>
    <property type="project" value="UniProtKB-UniRule"/>
</dbReference>
<dbReference type="GO" id="GO:0046872">
    <property type="term" value="F:metal ion binding"/>
    <property type="evidence" value="ECO:0007669"/>
    <property type="project" value="UniProtKB-KW"/>
</dbReference>
<dbReference type="GO" id="GO:0071555">
    <property type="term" value="P:cell wall organization"/>
    <property type="evidence" value="ECO:0007669"/>
    <property type="project" value="UniProtKB-KW"/>
</dbReference>
<dbReference type="GO" id="GO:0009252">
    <property type="term" value="P:peptidoglycan biosynthetic process"/>
    <property type="evidence" value="ECO:0007669"/>
    <property type="project" value="UniProtKB-UniRule"/>
</dbReference>
<dbReference type="GO" id="GO:0008360">
    <property type="term" value="P:regulation of cell shape"/>
    <property type="evidence" value="ECO:0007669"/>
    <property type="project" value="UniProtKB-KW"/>
</dbReference>
<dbReference type="Gene3D" id="3.40.50.20">
    <property type="match status" value="1"/>
</dbReference>
<dbReference type="Gene3D" id="3.30.1490.20">
    <property type="entry name" value="ATP-grasp fold, A domain"/>
    <property type="match status" value="1"/>
</dbReference>
<dbReference type="Gene3D" id="3.30.470.20">
    <property type="entry name" value="ATP-grasp fold, B domain"/>
    <property type="match status" value="1"/>
</dbReference>
<dbReference type="HAMAP" id="MF_00047">
    <property type="entry name" value="Dala_Dala_lig"/>
    <property type="match status" value="1"/>
</dbReference>
<dbReference type="InterPro" id="IPR011761">
    <property type="entry name" value="ATP-grasp"/>
</dbReference>
<dbReference type="InterPro" id="IPR013815">
    <property type="entry name" value="ATP_grasp_subdomain_1"/>
</dbReference>
<dbReference type="InterPro" id="IPR000291">
    <property type="entry name" value="D-Ala_lig_Van_CS"/>
</dbReference>
<dbReference type="InterPro" id="IPR005905">
    <property type="entry name" value="D_ala_D_ala"/>
</dbReference>
<dbReference type="InterPro" id="IPR011095">
    <property type="entry name" value="Dala_Dala_lig_C"/>
</dbReference>
<dbReference type="InterPro" id="IPR011127">
    <property type="entry name" value="Dala_Dala_lig_N"/>
</dbReference>
<dbReference type="InterPro" id="IPR016185">
    <property type="entry name" value="PreATP-grasp_dom_sf"/>
</dbReference>
<dbReference type="NCBIfam" id="TIGR01205">
    <property type="entry name" value="D_ala_D_alaTIGR"/>
    <property type="match status" value="1"/>
</dbReference>
<dbReference type="NCBIfam" id="NF002378">
    <property type="entry name" value="PRK01372.1"/>
    <property type="match status" value="1"/>
</dbReference>
<dbReference type="NCBIfam" id="NF002527">
    <property type="entry name" value="PRK01966.1-3"/>
    <property type="match status" value="1"/>
</dbReference>
<dbReference type="PANTHER" id="PTHR23132">
    <property type="entry name" value="D-ALANINE--D-ALANINE LIGASE"/>
    <property type="match status" value="1"/>
</dbReference>
<dbReference type="PANTHER" id="PTHR23132:SF23">
    <property type="entry name" value="D-ALANINE--D-ALANINE LIGASE B"/>
    <property type="match status" value="1"/>
</dbReference>
<dbReference type="Pfam" id="PF07478">
    <property type="entry name" value="Dala_Dala_lig_C"/>
    <property type="match status" value="1"/>
</dbReference>
<dbReference type="Pfam" id="PF01820">
    <property type="entry name" value="Dala_Dala_lig_N"/>
    <property type="match status" value="1"/>
</dbReference>
<dbReference type="PIRSF" id="PIRSF039102">
    <property type="entry name" value="Ddl/VanB"/>
    <property type="match status" value="1"/>
</dbReference>
<dbReference type="SUPFAM" id="SSF56059">
    <property type="entry name" value="Glutathione synthetase ATP-binding domain-like"/>
    <property type="match status" value="1"/>
</dbReference>
<dbReference type="SUPFAM" id="SSF52440">
    <property type="entry name" value="PreATP-grasp domain"/>
    <property type="match status" value="1"/>
</dbReference>
<dbReference type="PROSITE" id="PS50975">
    <property type="entry name" value="ATP_GRASP"/>
    <property type="match status" value="1"/>
</dbReference>
<dbReference type="PROSITE" id="PS00843">
    <property type="entry name" value="DALA_DALA_LIGASE_1"/>
    <property type="match status" value="1"/>
</dbReference>
<dbReference type="PROSITE" id="PS00844">
    <property type="entry name" value="DALA_DALA_LIGASE_2"/>
    <property type="match status" value="1"/>
</dbReference>
<feature type="chain" id="PRO_1000074775" description="D-alanine--D-alanine ligase">
    <location>
        <begin position="1"/>
        <end position="328"/>
    </location>
</feature>
<feature type="domain" description="ATP-grasp" evidence="2">
    <location>
        <begin position="118"/>
        <end position="317"/>
    </location>
</feature>
<feature type="binding site" evidence="2">
    <location>
        <begin position="146"/>
        <end position="201"/>
    </location>
    <ligand>
        <name>ATP</name>
        <dbReference type="ChEBI" id="CHEBI:30616"/>
    </ligand>
</feature>
<feature type="binding site" evidence="2">
    <location>
        <position position="272"/>
    </location>
    <ligand>
        <name>Mg(2+)</name>
        <dbReference type="ChEBI" id="CHEBI:18420"/>
        <label>1</label>
    </ligand>
</feature>
<feature type="binding site" evidence="2">
    <location>
        <position position="284"/>
    </location>
    <ligand>
        <name>Mg(2+)</name>
        <dbReference type="ChEBI" id="CHEBI:18420"/>
        <label>1</label>
    </ligand>
</feature>
<feature type="binding site" evidence="2">
    <location>
        <position position="284"/>
    </location>
    <ligand>
        <name>Mg(2+)</name>
        <dbReference type="ChEBI" id="CHEBI:18420"/>
        <label>2</label>
    </ligand>
</feature>
<feature type="binding site" evidence="2">
    <location>
        <position position="286"/>
    </location>
    <ligand>
        <name>Mg(2+)</name>
        <dbReference type="ChEBI" id="CHEBI:18420"/>
        <label>2</label>
    </ligand>
</feature>
<evidence type="ECO:0000250" key="1"/>
<evidence type="ECO:0000255" key="2">
    <source>
        <dbReference type="HAMAP-Rule" id="MF_00047"/>
    </source>
</evidence>
<proteinExistence type="inferred from homology"/>
<accession>A6GXD5</accession>
<protein>
    <recommendedName>
        <fullName evidence="2">D-alanine--D-alanine ligase</fullName>
        <ecNumber evidence="2">6.3.2.4</ecNumber>
    </recommendedName>
    <alternativeName>
        <fullName evidence="2">D-Ala-D-Ala ligase</fullName>
    </alternativeName>
    <alternativeName>
        <fullName evidence="2">D-alanylalanine synthetase</fullName>
    </alternativeName>
</protein>
<sequence length="328" mass="36681">MNVAVVMGGYSDESVISLRSGQLILNNLDKSKYNIFEVHILLKDWSVVIEGEKYPINKADFSFTKNGVITKFDVAINTVHGTPGEDGHLQSYWELIDIPYTGCNFYQSALTFNKRDTLSVLTKFNIPKAKSIYLRKGDVIDGNEIKKALGLPFFVKPNQSGSSLGVSKVDALDQLEKALEFAFAEDNEILIESYLNGTEVSVGVLNYKGQTKVLGITEILSQNDFFDYEAKYLGKSEEITPARISKEEEILVAESAKKIYNSLGMSGFSRTDFIIMNGIPHFIEINTNPGLSPQSIFPQQAMFAKMDMPQMLDNEITLALSRKPIWKK</sequence>
<gene>
    <name evidence="2" type="primary">ddl</name>
    <name type="ordered locus">FP0653</name>
</gene>